<proteinExistence type="inferred from homology"/>
<evidence type="ECO:0000255" key="1">
    <source>
        <dbReference type="HAMAP-Rule" id="MF_00621"/>
    </source>
</evidence>
<dbReference type="EMBL" id="BA000034">
    <property type="protein sequence ID" value="BAC63417.1"/>
    <property type="molecule type" value="Genomic_DNA"/>
</dbReference>
<dbReference type="RefSeq" id="WP_011106616.1">
    <property type="nucleotide sequence ID" value="NC_004606.1"/>
</dbReference>
<dbReference type="SMR" id="P0DA47"/>
<dbReference type="KEGG" id="sps:SPs0322"/>
<dbReference type="HOGENOM" id="CLU_089581_0_0_9"/>
<dbReference type="GO" id="GO:0005737">
    <property type="term" value="C:cytoplasm"/>
    <property type="evidence" value="ECO:0007669"/>
    <property type="project" value="UniProtKB-SubCell"/>
</dbReference>
<dbReference type="GO" id="GO:0003677">
    <property type="term" value="F:DNA binding"/>
    <property type="evidence" value="ECO:0007669"/>
    <property type="project" value="UniProtKB-UniRule"/>
</dbReference>
<dbReference type="GO" id="GO:0003700">
    <property type="term" value="F:DNA-binding transcription factor activity"/>
    <property type="evidence" value="ECO:0007669"/>
    <property type="project" value="InterPro"/>
</dbReference>
<dbReference type="GO" id="GO:0005525">
    <property type="term" value="F:GTP binding"/>
    <property type="evidence" value="ECO:0007669"/>
    <property type="project" value="InterPro"/>
</dbReference>
<dbReference type="GO" id="GO:0045892">
    <property type="term" value="P:negative regulation of DNA-templated transcription"/>
    <property type="evidence" value="ECO:0007669"/>
    <property type="project" value="UniProtKB-UniRule"/>
</dbReference>
<dbReference type="CDD" id="cd00090">
    <property type="entry name" value="HTH_ARSR"/>
    <property type="match status" value="1"/>
</dbReference>
<dbReference type="FunFam" id="1.10.10.10:FF:000034">
    <property type="entry name" value="GTP-sensing transcriptional pleiotropic repressor CodY"/>
    <property type="match status" value="1"/>
</dbReference>
<dbReference type="FunFam" id="3.30.450.40:FF:000003">
    <property type="entry name" value="GTP-sensing transcriptional pleiotropic repressor CodY"/>
    <property type="match status" value="1"/>
</dbReference>
<dbReference type="Gene3D" id="3.30.450.40">
    <property type="match status" value="1"/>
</dbReference>
<dbReference type="Gene3D" id="1.10.10.10">
    <property type="entry name" value="Winged helix-like DNA-binding domain superfamily/Winged helix DNA-binding domain"/>
    <property type="match status" value="1"/>
</dbReference>
<dbReference type="HAMAP" id="MF_00621">
    <property type="entry name" value="HTH_type_CodY"/>
    <property type="match status" value="1"/>
</dbReference>
<dbReference type="InterPro" id="IPR011991">
    <property type="entry name" value="ArsR-like_HTH"/>
</dbReference>
<dbReference type="InterPro" id="IPR014154">
    <property type="entry name" value="CodY"/>
</dbReference>
<dbReference type="InterPro" id="IPR029016">
    <property type="entry name" value="GAF-like_dom_sf"/>
</dbReference>
<dbReference type="InterPro" id="IPR013198">
    <property type="entry name" value="GTP_trans_reg_CodY_C"/>
</dbReference>
<dbReference type="InterPro" id="IPR010312">
    <property type="entry name" value="Transc_reg_CodY_N"/>
</dbReference>
<dbReference type="InterPro" id="IPR036388">
    <property type="entry name" value="WH-like_DNA-bd_sf"/>
</dbReference>
<dbReference type="InterPro" id="IPR036390">
    <property type="entry name" value="WH_DNA-bd_sf"/>
</dbReference>
<dbReference type="NCBIfam" id="TIGR02787">
    <property type="entry name" value="codY_Gpos"/>
    <property type="match status" value="1"/>
</dbReference>
<dbReference type="NCBIfam" id="NF003170">
    <property type="entry name" value="PRK04158.1"/>
    <property type="match status" value="1"/>
</dbReference>
<dbReference type="PANTHER" id="PTHR40062:SF1">
    <property type="entry name" value="GLOBAL TRANSCRIPTIONAL REGULATOR CODY"/>
    <property type="match status" value="1"/>
</dbReference>
<dbReference type="PANTHER" id="PTHR40062">
    <property type="entry name" value="GTP-SENSING TRANSCRIPTIONAL PLEIOTROPIC REPRESSOR CODY"/>
    <property type="match status" value="1"/>
</dbReference>
<dbReference type="Pfam" id="PF06018">
    <property type="entry name" value="CodY"/>
    <property type="match status" value="1"/>
</dbReference>
<dbReference type="Pfam" id="PF08222">
    <property type="entry name" value="HTH_CodY"/>
    <property type="match status" value="1"/>
</dbReference>
<dbReference type="PIRSF" id="PIRSF011572">
    <property type="entry name" value="GTP_sensing_CodY"/>
    <property type="match status" value="1"/>
</dbReference>
<dbReference type="SUPFAM" id="SSF46785">
    <property type="entry name" value="Winged helix' DNA-binding domain"/>
    <property type="match status" value="1"/>
</dbReference>
<organism>
    <name type="scientific">Streptococcus pyogenes serotype M3 (strain SSI-1)</name>
    <dbReference type="NCBI Taxonomy" id="193567"/>
    <lineage>
        <taxon>Bacteria</taxon>
        <taxon>Bacillati</taxon>
        <taxon>Bacillota</taxon>
        <taxon>Bacilli</taxon>
        <taxon>Lactobacillales</taxon>
        <taxon>Streptococcaceae</taxon>
        <taxon>Streptococcus</taxon>
    </lineage>
</organism>
<keyword id="KW-0963">Cytoplasm</keyword>
<keyword id="KW-0238">DNA-binding</keyword>
<keyword id="KW-0678">Repressor</keyword>
<keyword id="KW-0804">Transcription</keyword>
<keyword id="KW-0805">Transcription regulation</keyword>
<comment type="function">
    <text evidence="1">DNA-binding global transcriptional regulator which is involved in the adaptive response to starvation and acts by directly or indirectly controlling the expression of numerous genes in response to nutrient availability. During rapid exponential growth, CodY is highly active and represses genes whose products allow adaptation to nutrient depletion.</text>
</comment>
<comment type="subcellular location">
    <subcellularLocation>
        <location evidence="1">Cytoplasm</location>
    </subcellularLocation>
</comment>
<comment type="similarity">
    <text evidence="1">Belongs to the CodY family.</text>
</comment>
<accession>P0DA47</accession>
<accession>P0A350</accession>
<accession>Q99YB7</accession>
<name>CODY_STRPQ</name>
<feature type="chain" id="PRO_0000411311" description="Global transcriptional regulator CodY">
    <location>
        <begin position="1"/>
        <end position="260"/>
    </location>
</feature>
<feature type="DNA-binding region" description="H-T-H motif" evidence="1">
    <location>
        <begin position="207"/>
        <end position="226"/>
    </location>
</feature>
<feature type="region of interest" description="GAF domain" evidence="1">
    <location>
        <begin position="1"/>
        <end position="159"/>
    </location>
</feature>
<sequence length="260" mass="28615">MPNLLEKTRKITSILQHSVDSLETELPYNTMASRLADIIDCNACIINGGGTLLGYAMKYKTNTDRVEEFFEAKQFPDTYVKAASRVYDTEANLSVENELTIFPVESKDTYPGGLTTIAPIYGGGMRLGSLIIWRNDNEFSDDDLILVEISSTVVGIQLLNLQTENLEDTIRKQTAVNMAINTLSYSEMKAVAAILGELDGNEGRLTASVIADRIGITRSVIVNALRKLESAGIIESRSLGMKGTYLKVINEGIFAKLKEF</sequence>
<protein>
    <recommendedName>
        <fullName evidence="1">Global transcriptional regulator CodY</fullName>
    </recommendedName>
</protein>
<gene>
    <name evidence="1" type="primary">codY</name>
    <name type="ordered locus">SPs0322</name>
</gene>
<reference key="1">
    <citation type="journal article" date="2003" name="Genome Res.">
        <title>Genome sequence of an M3 strain of Streptococcus pyogenes reveals a large-scale genomic rearrangement in invasive strains and new insights into phage evolution.</title>
        <authorList>
            <person name="Nakagawa I."/>
            <person name="Kurokawa K."/>
            <person name="Yamashita A."/>
            <person name="Nakata M."/>
            <person name="Tomiyasu Y."/>
            <person name="Okahashi N."/>
            <person name="Kawabata S."/>
            <person name="Yamazaki K."/>
            <person name="Shiba T."/>
            <person name="Yasunaga T."/>
            <person name="Hayashi H."/>
            <person name="Hattori M."/>
            <person name="Hamada S."/>
        </authorList>
    </citation>
    <scope>NUCLEOTIDE SEQUENCE [LARGE SCALE GENOMIC DNA]</scope>
    <source>
        <strain>SSI-1</strain>
    </source>
</reference>